<comment type="function">
    <text evidence="2">Transports natural purines (adenine and guanine) as well as purine analogs. Confers sensitivity to 8-azaadenine and 8-azaguanine (8-azg).</text>
</comment>
<comment type="subcellular location">
    <subcellularLocation>
        <location evidence="3">Membrane</location>
        <topology evidence="3">Multi-pass membrane protein</topology>
    </subcellularLocation>
</comment>
<comment type="disruption phenotype">
    <text evidence="2">Resistance to 8-azaadenine and 8-azaguanine but not to other toxic nucleobase analogs. Deficiency in the uptake of adenine and guanine.</text>
</comment>
<comment type="similarity">
    <text evidence="3">Belongs to the nucleobase:cation symporter-2 (NCS2) (TC 2.A.40) family. Azg-like subfamily.</text>
</comment>
<keyword id="KW-0002">3D-structure</keyword>
<keyword id="KW-0472">Membrane</keyword>
<keyword id="KW-1185">Reference proteome</keyword>
<keyword id="KW-0812">Transmembrane</keyword>
<keyword id="KW-1133">Transmembrane helix</keyword>
<keyword id="KW-0813">Transport</keyword>
<gene>
    <name type="primary">AZG1</name>
    <name type="ordered locus">At3g10960</name>
    <name type="ORF">F9F8.22</name>
</gene>
<sequence length="579" mass="61669">MEQQQQQQLPSTTTRPKPKLLNRLNTYVGSSRVGKRFKLAERNSTFTTELRAGTATFLTMAYILAVNASILSDSGGTCSVSDCIPLCSNPAIEPSQCTGPGLRLIQPDVSCKFNPVNPGYAACVEEIRKDLIVATVAASLIGCVIMGLMANLPLALAPGMGTNAYFAYTVVGFHGSGSISYRTALAAVFIEGLIFLFISAIGFRAKLAKLVPKPVRISSSAGIGLFLAFIGLQNNQGIGLVGYSPSTLVTLAACPASSRISLAPVITSANGTVSLLAGGSVSGDIMCIHGRMESPTFWLGIVGFVIIAYCLVKNVKGAMIYGIVFVTAVSWFRNTEVTAFPNTSAGDAAHDYFKKIVDVHVIKHTAGALSFSGINKGHFWEALVTFLYVDILDTTGTLYSMARFAGFVDEKGDFAGQYFAFMSDASAIVIGSLLGTSPVTVFIESSTGIREGGRTGLTAITVAVYFLLAMFFTPLLASIPAWAVGPPLILVGVMMMKSVTEIDWEDMREAIPAFVTMILMPLTYSVAYGLIGGIGSYVVLHLWDWGEEGLVKLGFLKRKVKEEDNNNGVVKASEIDTTV</sequence>
<reference key="1">
    <citation type="journal article" date="2000" name="Nature">
        <title>Sequence and analysis of chromosome 3 of the plant Arabidopsis thaliana.</title>
        <authorList>
            <person name="Salanoubat M."/>
            <person name="Lemcke K."/>
            <person name="Rieger M."/>
            <person name="Ansorge W."/>
            <person name="Unseld M."/>
            <person name="Fartmann B."/>
            <person name="Valle G."/>
            <person name="Bloecker H."/>
            <person name="Perez-Alonso M."/>
            <person name="Obermaier B."/>
            <person name="Delseny M."/>
            <person name="Boutry M."/>
            <person name="Grivell L.A."/>
            <person name="Mache R."/>
            <person name="Puigdomenech P."/>
            <person name="De Simone V."/>
            <person name="Choisne N."/>
            <person name="Artiguenave F."/>
            <person name="Robert C."/>
            <person name="Brottier P."/>
            <person name="Wincker P."/>
            <person name="Cattolico L."/>
            <person name="Weissenbach J."/>
            <person name="Saurin W."/>
            <person name="Quetier F."/>
            <person name="Schaefer M."/>
            <person name="Mueller-Auer S."/>
            <person name="Gabel C."/>
            <person name="Fuchs M."/>
            <person name="Benes V."/>
            <person name="Wurmbach E."/>
            <person name="Drzonek H."/>
            <person name="Erfle H."/>
            <person name="Jordan N."/>
            <person name="Bangert S."/>
            <person name="Wiedelmann R."/>
            <person name="Kranz H."/>
            <person name="Voss H."/>
            <person name="Holland R."/>
            <person name="Brandt P."/>
            <person name="Nyakatura G."/>
            <person name="Vezzi A."/>
            <person name="D'Angelo M."/>
            <person name="Pallavicini A."/>
            <person name="Toppo S."/>
            <person name="Simionati B."/>
            <person name="Conrad A."/>
            <person name="Hornischer K."/>
            <person name="Kauer G."/>
            <person name="Loehnert T.-H."/>
            <person name="Nordsiek G."/>
            <person name="Reichelt J."/>
            <person name="Scharfe M."/>
            <person name="Schoen O."/>
            <person name="Bargues M."/>
            <person name="Terol J."/>
            <person name="Climent J."/>
            <person name="Navarro P."/>
            <person name="Collado C."/>
            <person name="Perez-Perez A."/>
            <person name="Ottenwaelder B."/>
            <person name="Duchemin D."/>
            <person name="Cooke R."/>
            <person name="Laudie M."/>
            <person name="Berger-Llauro C."/>
            <person name="Purnelle B."/>
            <person name="Masuy D."/>
            <person name="de Haan M."/>
            <person name="Maarse A.C."/>
            <person name="Alcaraz J.-P."/>
            <person name="Cottet A."/>
            <person name="Casacuberta E."/>
            <person name="Monfort A."/>
            <person name="Argiriou A."/>
            <person name="Flores M."/>
            <person name="Liguori R."/>
            <person name="Vitale D."/>
            <person name="Mannhaupt G."/>
            <person name="Haase D."/>
            <person name="Schoof H."/>
            <person name="Rudd S."/>
            <person name="Zaccaria P."/>
            <person name="Mewes H.-W."/>
            <person name="Mayer K.F.X."/>
            <person name="Kaul S."/>
            <person name="Town C.D."/>
            <person name="Koo H.L."/>
            <person name="Tallon L.J."/>
            <person name="Jenkins J."/>
            <person name="Rooney T."/>
            <person name="Rizzo M."/>
            <person name="Walts A."/>
            <person name="Utterback T."/>
            <person name="Fujii C.Y."/>
            <person name="Shea T.P."/>
            <person name="Creasy T.H."/>
            <person name="Haas B."/>
            <person name="Maiti R."/>
            <person name="Wu D."/>
            <person name="Peterson J."/>
            <person name="Van Aken S."/>
            <person name="Pai G."/>
            <person name="Militscher J."/>
            <person name="Sellers P."/>
            <person name="Gill J.E."/>
            <person name="Feldblyum T.V."/>
            <person name="Preuss D."/>
            <person name="Lin X."/>
            <person name="Nierman W.C."/>
            <person name="Salzberg S.L."/>
            <person name="White O."/>
            <person name="Venter J.C."/>
            <person name="Fraser C.M."/>
            <person name="Kaneko T."/>
            <person name="Nakamura Y."/>
            <person name="Sato S."/>
            <person name="Kato T."/>
            <person name="Asamizu E."/>
            <person name="Sasamoto S."/>
            <person name="Kimura T."/>
            <person name="Idesawa K."/>
            <person name="Kawashima K."/>
            <person name="Kishida Y."/>
            <person name="Kiyokawa C."/>
            <person name="Kohara M."/>
            <person name="Matsumoto M."/>
            <person name="Matsuno A."/>
            <person name="Muraki A."/>
            <person name="Nakayama S."/>
            <person name="Nakazaki N."/>
            <person name="Shinpo S."/>
            <person name="Takeuchi C."/>
            <person name="Wada T."/>
            <person name="Watanabe A."/>
            <person name="Yamada M."/>
            <person name="Yasuda M."/>
            <person name="Tabata S."/>
        </authorList>
    </citation>
    <scope>NUCLEOTIDE SEQUENCE [LARGE SCALE GENOMIC DNA]</scope>
    <source>
        <strain>cv. Columbia</strain>
    </source>
</reference>
<reference key="2">
    <citation type="journal article" date="2017" name="Plant J.">
        <title>Araport11: a complete reannotation of the Arabidopsis thaliana reference genome.</title>
        <authorList>
            <person name="Cheng C.Y."/>
            <person name="Krishnakumar V."/>
            <person name="Chan A.P."/>
            <person name="Thibaud-Nissen F."/>
            <person name="Schobel S."/>
            <person name="Town C.D."/>
        </authorList>
    </citation>
    <scope>GENOME REANNOTATION</scope>
    <source>
        <strain>cv. Columbia</strain>
    </source>
</reference>
<reference key="3">
    <citation type="journal article" date="2003" name="Science">
        <title>Empirical analysis of transcriptional activity in the Arabidopsis genome.</title>
        <authorList>
            <person name="Yamada K."/>
            <person name="Lim J."/>
            <person name="Dale J.M."/>
            <person name="Chen H."/>
            <person name="Shinn P."/>
            <person name="Palm C.J."/>
            <person name="Southwick A.M."/>
            <person name="Wu H.C."/>
            <person name="Kim C.J."/>
            <person name="Nguyen M."/>
            <person name="Pham P.K."/>
            <person name="Cheuk R.F."/>
            <person name="Karlin-Newmann G."/>
            <person name="Liu S.X."/>
            <person name="Lam B."/>
            <person name="Sakano H."/>
            <person name="Wu T."/>
            <person name="Yu G."/>
            <person name="Miranda M."/>
            <person name="Quach H.L."/>
            <person name="Tripp M."/>
            <person name="Chang C.H."/>
            <person name="Lee J.M."/>
            <person name="Toriumi M.J."/>
            <person name="Chan M.M."/>
            <person name="Tang C.C."/>
            <person name="Onodera C.S."/>
            <person name="Deng J.M."/>
            <person name="Akiyama K."/>
            <person name="Ansari Y."/>
            <person name="Arakawa T."/>
            <person name="Banh J."/>
            <person name="Banno F."/>
            <person name="Bowser L."/>
            <person name="Brooks S.Y."/>
            <person name="Carninci P."/>
            <person name="Chao Q."/>
            <person name="Choy N."/>
            <person name="Enju A."/>
            <person name="Goldsmith A.D."/>
            <person name="Gurjal M."/>
            <person name="Hansen N.F."/>
            <person name="Hayashizaki Y."/>
            <person name="Johnson-Hopson C."/>
            <person name="Hsuan V.W."/>
            <person name="Iida K."/>
            <person name="Karnes M."/>
            <person name="Khan S."/>
            <person name="Koesema E."/>
            <person name="Ishida J."/>
            <person name="Jiang P.X."/>
            <person name="Jones T."/>
            <person name="Kawai J."/>
            <person name="Kamiya A."/>
            <person name="Meyers C."/>
            <person name="Nakajima M."/>
            <person name="Narusaka M."/>
            <person name="Seki M."/>
            <person name="Sakurai T."/>
            <person name="Satou M."/>
            <person name="Tamse R."/>
            <person name="Vaysberg M."/>
            <person name="Wallender E.K."/>
            <person name="Wong C."/>
            <person name="Yamamura Y."/>
            <person name="Yuan S."/>
            <person name="Shinozaki K."/>
            <person name="Davis R.W."/>
            <person name="Theologis A."/>
            <person name="Ecker J.R."/>
        </authorList>
    </citation>
    <scope>NUCLEOTIDE SEQUENCE [LARGE SCALE MRNA]</scope>
    <source>
        <strain>cv. Columbia</strain>
    </source>
</reference>
<reference key="4">
    <citation type="submission" date="2002-03" db="EMBL/GenBank/DDBJ databases">
        <title>Full-length cDNA from Arabidopsis thaliana.</title>
        <authorList>
            <person name="Brover V.V."/>
            <person name="Troukhan M.E."/>
            <person name="Alexandrov N.A."/>
            <person name="Lu Y.-P."/>
            <person name="Flavell R.B."/>
            <person name="Feldmann K.A."/>
        </authorList>
    </citation>
    <scope>NUCLEOTIDE SEQUENCE [LARGE SCALE MRNA]</scope>
</reference>
<reference key="5">
    <citation type="submission" date="2006-07" db="EMBL/GenBank/DDBJ databases">
        <title>Large-scale analysis of RIKEN Arabidopsis full-length (RAFL) cDNAs.</title>
        <authorList>
            <person name="Totoki Y."/>
            <person name="Seki M."/>
            <person name="Ishida J."/>
            <person name="Nakajima M."/>
            <person name="Enju A."/>
            <person name="Kamiya A."/>
            <person name="Narusaka M."/>
            <person name="Shin-i T."/>
            <person name="Nakagawa M."/>
            <person name="Sakamoto N."/>
            <person name="Oishi K."/>
            <person name="Kohara Y."/>
            <person name="Kobayashi M."/>
            <person name="Toyoda A."/>
            <person name="Sakaki Y."/>
            <person name="Sakurai T."/>
            <person name="Iida K."/>
            <person name="Akiyama K."/>
            <person name="Satou M."/>
            <person name="Toyoda T."/>
            <person name="Konagaya A."/>
            <person name="Carninci P."/>
            <person name="Kawai J."/>
            <person name="Hayashizaki Y."/>
            <person name="Shinozaki K."/>
        </authorList>
    </citation>
    <scope>NUCLEOTIDE SEQUENCE [LARGE SCALE MRNA] OF 32-579</scope>
    <source>
        <strain>cv. Columbia</strain>
    </source>
</reference>
<reference key="6">
    <citation type="journal article" date="2009" name="FEBS Lett.">
        <title>AtAzg1 and AtAzg2 comprise a novel family of purine transporters in Arabidopsis.</title>
        <authorList>
            <person name="Mansfield T.A."/>
            <person name="Schultes N.P."/>
            <person name="Mourad G.S."/>
        </authorList>
    </citation>
    <scope>FUNCTION</scope>
    <scope>DISRUPTION PHENOTYPE</scope>
</reference>
<accession>Q9SRK7</accession>
<accession>Q0WUT2</accession>
<accession>Q8LDL2</accession>
<protein>
    <recommendedName>
        <fullName>Adenine/guanine permease AZG1</fullName>
    </recommendedName>
    <alternativeName>
        <fullName>AzgA-homolog protein</fullName>
    </alternativeName>
    <alternativeName>
        <fullName>Protein AZAGUANINE RESISTANT 1</fullName>
        <shortName>AtAzg1</shortName>
    </alternativeName>
</protein>
<dbReference type="EMBL" id="AC009991">
    <property type="protein sequence ID" value="AAF01525.1"/>
    <property type="molecule type" value="Genomic_DNA"/>
</dbReference>
<dbReference type="EMBL" id="CP002686">
    <property type="protein sequence ID" value="AEE74982.1"/>
    <property type="molecule type" value="Genomic_DNA"/>
</dbReference>
<dbReference type="EMBL" id="AY093125">
    <property type="protein sequence ID" value="AAM13124.1"/>
    <property type="molecule type" value="mRNA"/>
</dbReference>
<dbReference type="EMBL" id="BT010556">
    <property type="protein sequence ID" value="AAQ65179.1"/>
    <property type="molecule type" value="mRNA"/>
</dbReference>
<dbReference type="EMBL" id="AY085941">
    <property type="protein sequence ID" value="AAM63152.1"/>
    <property type="molecule type" value="mRNA"/>
</dbReference>
<dbReference type="EMBL" id="AK227056">
    <property type="protein sequence ID" value="BAE99116.1"/>
    <property type="molecule type" value="mRNA"/>
</dbReference>
<dbReference type="RefSeq" id="NP_566384.1">
    <property type="nucleotide sequence ID" value="NM_111933.3"/>
</dbReference>
<dbReference type="PDB" id="8IRL">
    <property type="method" value="EM"/>
    <property type="resolution" value="2.70 A"/>
    <property type="chains" value="A/B=1-579"/>
</dbReference>
<dbReference type="PDB" id="8IRM">
    <property type="method" value="EM"/>
    <property type="resolution" value="2.60 A"/>
    <property type="chains" value="A/B=1-579"/>
</dbReference>
<dbReference type="PDB" id="8IRN">
    <property type="method" value="EM"/>
    <property type="resolution" value="2.70 A"/>
    <property type="chains" value="A/B=1-579"/>
</dbReference>
<dbReference type="PDB" id="8IRO">
    <property type="method" value="EM"/>
    <property type="resolution" value="2.70 A"/>
    <property type="chains" value="A/B=1-579"/>
</dbReference>
<dbReference type="PDB" id="8IRP">
    <property type="method" value="EM"/>
    <property type="resolution" value="2.80 A"/>
    <property type="chains" value="A/B=1-579"/>
</dbReference>
<dbReference type="PDB" id="8WMQ">
    <property type="method" value="EM"/>
    <property type="resolution" value="3.30 A"/>
    <property type="chains" value="A/B=1-579"/>
</dbReference>
<dbReference type="PDB" id="8WO7">
    <property type="method" value="EM"/>
    <property type="resolution" value="2.90 A"/>
    <property type="chains" value="A/B=1-579"/>
</dbReference>
<dbReference type="PDBsum" id="8IRL"/>
<dbReference type="PDBsum" id="8IRM"/>
<dbReference type="PDBsum" id="8IRN"/>
<dbReference type="PDBsum" id="8IRO"/>
<dbReference type="PDBsum" id="8IRP"/>
<dbReference type="PDBsum" id="8WMQ"/>
<dbReference type="PDBsum" id="8WO7"/>
<dbReference type="EMDB" id="EMD-35678"/>
<dbReference type="EMDB" id="EMD-35679"/>
<dbReference type="EMDB" id="EMD-35680"/>
<dbReference type="EMDB" id="EMD-35681"/>
<dbReference type="EMDB" id="EMD-35682"/>
<dbReference type="EMDB" id="EMD-37658"/>
<dbReference type="EMDB" id="EMD-37681"/>
<dbReference type="SMR" id="Q9SRK7"/>
<dbReference type="BioGRID" id="5601">
    <property type="interactions" value="6"/>
</dbReference>
<dbReference type="FunCoup" id="Q9SRK7">
    <property type="interactions" value="79"/>
</dbReference>
<dbReference type="IntAct" id="Q9SRK7">
    <property type="interactions" value="3"/>
</dbReference>
<dbReference type="STRING" id="3702.Q9SRK7"/>
<dbReference type="TCDB" id="2.A.40.7.3">
    <property type="family name" value="the nucleobase/ascorbate transporter (nat) or nucleobase:cation symporter-2 (ncs2) family"/>
</dbReference>
<dbReference type="iPTMnet" id="Q9SRK7"/>
<dbReference type="PaxDb" id="3702-AT3G10960.1"/>
<dbReference type="ProteomicsDB" id="240947"/>
<dbReference type="EnsemblPlants" id="AT3G10960.1">
    <property type="protein sequence ID" value="AT3G10960.1"/>
    <property type="gene ID" value="AT3G10960"/>
</dbReference>
<dbReference type="GeneID" id="820267"/>
<dbReference type="Gramene" id="AT3G10960.1">
    <property type="protein sequence ID" value="AT3G10960.1"/>
    <property type="gene ID" value="AT3G10960"/>
</dbReference>
<dbReference type="KEGG" id="ath:AT3G10960"/>
<dbReference type="Araport" id="AT3G10960"/>
<dbReference type="TAIR" id="AT3G10960">
    <property type="gene designation" value="AZG1"/>
</dbReference>
<dbReference type="eggNOG" id="ENOG502QQ5E">
    <property type="taxonomic scope" value="Eukaryota"/>
</dbReference>
<dbReference type="HOGENOM" id="CLU_024508_3_2_1"/>
<dbReference type="InParanoid" id="Q9SRK7"/>
<dbReference type="OMA" id="RKGSYFF"/>
<dbReference type="PhylomeDB" id="Q9SRK7"/>
<dbReference type="PRO" id="PR:Q9SRK7"/>
<dbReference type="Proteomes" id="UP000006548">
    <property type="component" value="Chromosome 3"/>
</dbReference>
<dbReference type="ExpressionAtlas" id="Q9SRK7">
    <property type="expression patterns" value="baseline and differential"/>
</dbReference>
<dbReference type="GO" id="GO:0005829">
    <property type="term" value="C:cytosol"/>
    <property type="evidence" value="ECO:0007005"/>
    <property type="project" value="TAIR"/>
</dbReference>
<dbReference type="GO" id="GO:0016020">
    <property type="term" value="C:membrane"/>
    <property type="evidence" value="ECO:0007669"/>
    <property type="project" value="UniProtKB-SubCell"/>
</dbReference>
<dbReference type="GO" id="GO:0005345">
    <property type="term" value="F:purine nucleobase transmembrane transporter activity"/>
    <property type="evidence" value="ECO:0000315"/>
    <property type="project" value="TAIR"/>
</dbReference>
<dbReference type="GO" id="GO:0015853">
    <property type="term" value="P:adenine transport"/>
    <property type="evidence" value="ECO:0000315"/>
    <property type="project" value="UniProtKB"/>
</dbReference>
<dbReference type="GO" id="GO:0015854">
    <property type="term" value="P:guanine transport"/>
    <property type="evidence" value="ECO:0000315"/>
    <property type="project" value="UniProtKB"/>
</dbReference>
<dbReference type="GO" id="GO:0006863">
    <property type="term" value="P:purine nucleobase transport"/>
    <property type="evidence" value="ECO:0000315"/>
    <property type="project" value="TAIR"/>
</dbReference>
<dbReference type="InterPro" id="IPR045018">
    <property type="entry name" value="Azg-like"/>
</dbReference>
<dbReference type="InterPro" id="IPR006043">
    <property type="entry name" value="NCS2"/>
</dbReference>
<dbReference type="PANTHER" id="PTHR43337:SF19">
    <property type="entry name" value="ADENINE_GUANINE PERMEASE AZG1"/>
    <property type="match status" value="1"/>
</dbReference>
<dbReference type="PANTHER" id="PTHR43337">
    <property type="entry name" value="XANTHINE/URACIL PERMEASE C887.17-RELATED"/>
    <property type="match status" value="1"/>
</dbReference>
<dbReference type="Pfam" id="PF00860">
    <property type="entry name" value="Xan_ur_permease"/>
    <property type="match status" value="2"/>
</dbReference>
<organism>
    <name type="scientific">Arabidopsis thaliana</name>
    <name type="common">Mouse-ear cress</name>
    <dbReference type="NCBI Taxonomy" id="3702"/>
    <lineage>
        <taxon>Eukaryota</taxon>
        <taxon>Viridiplantae</taxon>
        <taxon>Streptophyta</taxon>
        <taxon>Embryophyta</taxon>
        <taxon>Tracheophyta</taxon>
        <taxon>Spermatophyta</taxon>
        <taxon>Magnoliopsida</taxon>
        <taxon>eudicotyledons</taxon>
        <taxon>Gunneridae</taxon>
        <taxon>Pentapetalae</taxon>
        <taxon>rosids</taxon>
        <taxon>malvids</taxon>
        <taxon>Brassicales</taxon>
        <taxon>Brassicaceae</taxon>
        <taxon>Camelineae</taxon>
        <taxon>Arabidopsis</taxon>
    </lineage>
</organism>
<feature type="chain" id="PRO_0000379905" description="Adenine/guanine permease AZG1">
    <location>
        <begin position="1"/>
        <end position="579"/>
    </location>
</feature>
<feature type="transmembrane region" description="Helical" evidence="1">
    <location>
        <begin position="52"/>
        <end position="72"/>
    </location>
</feature>
<feature type="transmembrane region" description="Helical" evidence="1">
    <location>
        <begin position="131"/>
        <end position="151"/>
    </location>
</feature>
<feature type="transmembrane region" description="Helical" evidence="1">
    <location>
        <begin position="183"/>
        <end position="203"/>
    </location>
</feature>
<feature type="transmembrane region" description="Helical" evidence="1">
    <location>
        <begin position="221"/>
        <end position="241"/>
    </location>
</feature>
<feature type="transmembrane region" description="Helical" evidence="1">
    <location>
        <begin position="260"/>
        <end position="280"/>
    </location>
</feature>
<feature type="transmembrane region" description="Helical" evidence="1">
    <location>
        <begin position="292"/>
        <end position="312"/>
    </location>
</feature>
<feature type="transmembrane region" description="Helical" evidence="1">
    <location>
        <begin position="320"/>
        <end position="340"/>
    </location>
</feature>
<feature type="transmembrane region" description="Helical" evidence="1">
    <location>
        <begin position="379"/>
        <end position="399"/>
    </location>
</feature>
<feature type="transmembrane region" description="Helical" evidence="1">
    <location>
        <begin position="414"/>
        <end position="434"/>
    </location>
</feature>
<feature type="transmembrane region" description="Helical" evidence="1">
    <location>
        <begin position="459"/>
        <end position="479"/>
    </location>
</feature>
<feature type="transmembrane region" description="Helical" evidence="1">
    <location>
        <begin position="480"/>
        <end position="500"/>
    </location>
</feature>
<feature type="transmembrane region" description="Helical" evidence="1">
    <location>
        <begin position="514"/>
        <end position="534"/>
    </location>
</feature>
<feature type="sequence conflict" description="In Ref. 4; AAM63152." evidence="3" ref="4">
    <original>T</original>
    <variation>S</variation>
    <location>
        <position position="26"/>
    </location>
</feature>
<feature type="sequence conflict" description="In Ref. 5; BAE99116." evidence="3" ref="5">
    <original>R</original>
    <variation>G</variation>
    <location>
        <position position="32"/>
    </location>
</feature>
<feature type="helix" evidence="5">
    <location>
        <begin position="20"/>
        <end position="30"/>
    </location>
</feature>
<feature type="helix" evidence="5">
    <location>
        <begin position="32"/>
        <end position="36"/>
    </location>
</feature>
<feature type="turn" evidence="5">
    <location>
        <begin position="37"/>
        <end position="39"/>
    </location>
</feature>
<feature type="helix" evidence="5">
    <location>
        <begin position="40"/>
        <end position="42"/>
    </location>
</feature>
<feature type="helix" evidence="5">
    <location>
        <begin position="47"/>
        <end position="60"/>
    </location>
</feature>
<feature type="helix" evidence="5">
    <location>
        <begin position="63"/>
        <end position="73"/>
    </location>
</feature>
<feature type="turn" evidence="5">
    <location>
        <begin position="74"/>
        <end position="77"/>
    </location>
</feature>
<feature type="helix" evidence="5">
    <location>
        <begin position="80"/>
        <end position="82"/>
    </location>
</feature>
<feature type="strand" evidence="5">
    <location>
        <begin position="86"/>
        <end position="89"/>
    </location>
</feature>
<feature type="helix" evidence="5">
    <location>
        <begin position="94"/>
        <end position="96"/>
    </location>
</feature>
<feature type="helix" evidence="5">
    <location>
        <begin position="109"/>
        <end position="112"/>
    </location>
</feature>
<feature type="strand" evidence="5">
    <location>
        <begin position="113"/>
        <end position="115"/>
    </location>
</feature>
<feature type="helix" evidence="5">
    <location>
        <begin position="118"/>
        <end position="148"/>
    </location>
</feature>
<feature type="strand" evidence="5">
    <location>
        <begin position="156"/>
        <end position="158"/>
    </location>
</feature>
<feature type="helix" evidence="5">
    <location>
        <begin position="160"/>
        <end position="168"/>
    </location>
</feature>
<feature type="turn" evidence="5">
    <location>
        <begin position="169"/>
        <end position="171"/>
    </location>
</feature>
<feature type="helix" evidence="4">
    <location>
        <begin position="173"/>
        <end position="175"/>
    </location>
</feature>
<feature type="strand" evidence="5">
    <location>
        <begin position="177"/>
        <end position="179"/>
    </location>
</feature>
<feature type="helix" evidence="5">
    <location>
        <begin position="181"/>
        <end position="201"/>
    </location>
</feature>
<feature type="helix" evidence="5">
    <location>
        <begin position="204"/>
        <end position="210"/>
    </location>
</feature>
<feature type="helix" evidence="5">
    <location>
        <begin position="213"/>
        <end position="231"/>
    </location>
</feature>
<feature type="turn" evidence="5">
    <location>
        <begin position="234"/>
        <end position="236"/>
    </location>
</feature>
<feature type="strand" evidence="5">
    <location>
        <begin position="241"/>
        <end position="244"/>
    </location>
</feature>
<feature type="turn" evidence="5">
    <location>
        <begin position="245"/>
        <end position="247"/>
    </location>
</feature>
<feature type="strand" evidence="5">
    <location>
        <begin position="248"/>
        <end position="251"/>
    </location>
</feature>
<feature type="helix" evidence="5">
    <location>
        <begin position="256"/>
        <end position="258"/>
    </location>
</feature>
<feature type="strand" evidence="5">
    <location>
        <begin position="259"/>
        <end position="266"/>
    </location>
</feature>
<feature type="strand" evidence="4">
    <location>
        <begin position="269"/>
        <end position="271"/>
    </location>
</feature>
<feature type="strand" evidence="4">
    <location>
        <begin position="273"/>
        <end position="275"/>
    </location>
</feature>
<feature type="helix" evidence="5">
    <location>
        <begin position="295"/>
        <end position="312"/>
    </location>
</feature>
<feature type="helix" evidence="5">
    <location>
        <begin position="318"/>
        <end position="330"/>
    </location>
</feature>
<feature type="strand" evidence="4">
    <location>
        <begin position="333"/>
        <end position="335"/>
    </location>
</feature>
<feature type="helix" evidence="5">
    <location>
        <begin position="344"/>
        <end position="354"/>
    </location>
</feature>
<feature type="strand" evidence="5">
    <location>
        <begin position="363"/>
        <end position="365"/>
    </location>
</feature>
<feature type="helix" evidence="5">
    <location>
        <begin position="371"/>
        <end position="373"/>
    </location>
</feature>
<feature type="helix" evidence="5">
    <location>
        <begin position="377"/>
        <end position="404"/>
    </location>
</feature>
<feature type="strand" evidence="6">
    <location>
        <begin position="410"/>
        <end position="412"/>
    </location>
</feature>
<feature type="helix" evidence="5">
    <location>
        <begin position="417"/>
        <end position="434"/>
    </location>
</feature>
<feature type="strand" evidence="5">
    <location>
        <begin position="439"/>
        <end position="441"/>
    </location>
</feature>
<feature type="helix" evidence="5">
    <location>
        <begin position="445"/>
        <end position="451"/>
    </location>
</feature>
<feature type="helix" evidence="5">
    <location>
        <begin position="457"/>
        <end position="469"/>
    </location>
</feature>
<feature type="helix" evidence="5">
    <location>
        <begin position="473"/>
        <end position="476"/>
    </location>
</feature>
<feature type="helix" evidence="5">
    <location>
        <begin position="481"/>
        <end position="495"/>
    </location>
</feature>
<feature type="helix" evidence="5">
    <location>
        <begin position="496"/>
        <end position="501"/>
    </location>
</feature>
<feature type="helix" evidence="5">
    <location>
        <begin position="507"/>
        <end position="522"/>
    </location>
</feature>
<feature type="helix" evidence="5">
    <location>
        <begin position="526"/>
        <end position="553"/>
    </location>
</feature>
<name>AZG1_ARATH</name>
<evidence type="ECO:0000255" key="1"/>
<evidence type="ECO:0000269" key="2">
    <source>
    </source>
</evidence>
<evidence type="ECO:0000305" key="3"/>
<evidence type="ECO:0007829" key="4">
    <source>
        <dbReference type="PDB" id="8IRL"/>
    </source>
</evidence>
<evidence type="ECO:0007829" key="5">
    <source>
        <dbReference type="PDB" id="8IRM"/>
    </source>
</evidence>
<evidence type="ECO:0007829" key="6">
    <source>
        <dbReference type="PDB" id="8WMQ"/>
    </source>
</evidence>
<proteinExistence type="evidence at protein level"/>